<feature type="chain" id="PRO_0000241107" description="Glutamyl-tRNA(Gln) amidotransferase subunit A">
    <location>
        <begin position="1"/>
        <end position="495"/>
    </location>
</feature>
<feature type="active site" description="Charge relay system" evidence="1">
    <location>
        <position position="79"/>
    </location>
</feature>
<feature type="active site" description="Charge relay system" evidence="1">
    <location>
        <position position="159"/>
    </location>
</feature>
<feature type="active site" description="Acyl-ester intermediate" evidence="1">
    <location>
        <position position="183"/>
    </location>
</feature>
<proteinExistence type="inferred from homology"/>
<accession>Q5FND3</accession>
<protein>
    <recommendedName>
        <fullName evidence="1">Glutamyl-tRNA(Gln) amidotransferase subunit A</fullName>
        <shortName evidence="1">Glu-ADT subunit A</shortName>
        <ecNumber evidence="1">6.3.5.7</ecNumber>
    </recommendedName>
</protein>
<comment type="function">
    <text evidence="1">Allows the formation of correctly charged Gln-tRNA(Gln) through the transamidation of misacylated Glu-tRNA(Gln) in organisms which lack glutaminyl-tRNA synthetase. The reaction takes place in the presence of glutamine and ATP through an activated gamma-phospho-Glu-tRNA(Gln).</text>
</comment>
<comment type="catalytic activity">
    <reaction evidence="1">
        <text>L-glutamyl-tRNA(Gln) + L-glutamine + ATP + H2O = L-glutaminyl-tRNA(Gln) + L-glutamate + ADP + phosphate + H(+)</text>
        <dbReference type="Rhea" id="RHEA:17521"/>
        <dbReference type="Rhea" id="RHEA-COMP:9681"/>
        <dbReference type="Rhea" id="RHEA-COMP:9684"/>
        <dbReference type="ChEBI" id="CHEBI:15377"/>
        <dbReference type="ChEBI" id="CHEBI:15378"/>
        <dbReference type="ChEBI" id="CHEBI:29985"/>
        <dbReference type="ChEBI" id="CHEBI:30616"/>
        <dbReference type="ChEBI" id="CHEBI:43474"/>
        <dbReference type="ChEBI" id="CHEBI:58359"/>
        <dbReference type="ChEBI" id="CHEBI:78520"/>
        <dbReference type="ChEBI" id="CHEBI:78521"/>
        <dbReference type="ChEBI" id="CHEBI:456216"/>
        <dbReference type="EC" id="6.3.5.7"/>
    </reaction>
</comment>
<comment type="subunit">
    <text evidence="1">Heterotrimer of A, B and C subunits.</text>
</comment>
<comment type="similarity">
    <text evidence="1">Belongs to the amidase family. GatA subfamily.</text>
</comment>
<evidence type="ECO:0000255" key="1">
    <source>
        <dbReference type="HAMAP-Rule" id="MF_00120"/>
    </source>
</evidence>
<keyword id="KW-0067">ATP-binding</keyword>
<keyword id="KW-0436">Ligase</keyword>
<keyword id="KW-0547">Nucleotide-binding</keyword>
<keyword id="KW-0648">Protein biosynthesis</keyword>
<keyword id="KW-1185">Reference proteome</keyword>
<reference key="1">
    <citation type="journal article" date="2005" name="Nat. Biotechnol.">
        <title>Complete genome sequence of the acetic acid bacterium Gluconobacter oxydans.</title>
        <authorList>
            <person name="Prust C."/>
            <person name="Hoffmeister M."/>
            <person name="Liesegang H."/>
            <person name="Wiezer A."/>
            <person name="Fricke W.F."/>
            <person name="Ehrenreich A."/>
            <person name="Gottschalk G."/>
            <person name="Deppenmeier U."/>
        </authorList>
    </citation>
    <scope>NUCLEOTIDE SEQUENCE [LARGE SCALE GENOMIC DNA]</scope>
    <source>
        <strain>621H</strain>
    </source>
</reference>
<dbReference type="EC" id="6.3.5.7" evidence="1"/>
<dbReference type="EMBL" id="CP000009">
    <property type="protein sequence ID" value="AAW62114.1"/>
    <property type="molecule type" value="Genomic_DNA"/>
</dbReference>
<dbReference type="RefSeq" id="WP_011253883.1">
    <property type="nucleotide sequence ID" value="NC_006677.1"/>
</dbReference>
<dbReference type="SMR" id="Q5FND3"/>
<dbReference type="STRING" id="290633.GOX2383"/>
<dbReference type="KEGG" id="gox:GOX2383"/>
<dbReference type="eggNOG" id="COG0154">
    <property type="taxonomic scope" value="Bacteria"/>
</dbReference>
<dbReference type="HOGENOM" id="CLU_009600_0_3_5"/>
<dbReference type="Proteomes" id="UP000006375">
    <property type="component" value="Chromosome"/>
</dbReference>
<dbReference type="GO" id="GO:0030956">
    <property type="term" value="C:glutamyl-tRNA(Gln) amidotransferase complex"/>
    <property type="evidence" value="ECO:0007669"/>
    <property type="project" value="InterPro"/>
</dbReference>
<dbReference type="GO" id="GO:0005524">
    <property type="term" value="F:ATP binding"/>
    <property type="evidence" value="ECO:0007669"/>
    <property type="project" value="UniProtKB-KW"/>
</dbReference>
<dbReference type="GO" id="GO:0050567">
    <property type="term" value="F:glutaminyl-tRNA synthase (glutamine-hydrolyzing) activity"/>
    <property type="evidence" value="ECO:0007669"/>
    <property type="project" value="UniProtKB-UniRule"/>
</dbReference>
<dbReference type="GO" id="GO:0006412">
    <property type="term" value="P:translation"/>
    <property type="evidence" value="ECO:0007669"/>
    <property type="project" value="UniProtKB-UniRule"/>
</dbReference>
<dbReference type="Gene3D" id="3.90.1300.10">
    <property type="entry name" value="Amidase signature (AS) domain"/>
    <property type="match status" value="1"/>
</dbReference>
<dbReference type="HAMAP" id="MF_00120">
    <property type="entry name" value="GatA"/>
    <property type="match status" value="1"/>
</dbReference>
<dbReference type="InterPro" id="IPR000120">
    <property type="entry name" value="Amidase"/>
</dbReference>
<dbReference type="InterPro" id="IPR020556">
    <property type="entry name" value="Amidase_CS"/>
</dbReference>
<dbReference type="InterPro" id="IPR023631">
    <property type="entry name" value="Amidase_dom"/>
</dbReference>
<dbReference type="InterPro" id="IPR036928">
    <property type="entry name" value="AS_sf"/>
</dbReference>
<dbReference type="InterPro" id="IPR004412">
    <property type="entry name" value="GatA"/>
</dbReference>
<dbReference type="NCBIfam" id="TIGR00132">
    <property type="entry name" value="gatA"/>
    <property type="match status" value="1"/>
</dbReference>
<dbReference type="PANTHER" id="PTHR11895:SF151">
    <property type="entry name" value="GLUTAMYL-TRNA(GLN) AMIDOTRANSFERASE SUBUNIT A"/>
    <property type="match status" value="1"/>
</dbReference>
<dbReference type="PANTHER" id="PTHR11895">
    <property type="entry name" value="TRANSAMIDASE"/>
    <property type="match status" value="1"/>
</dbReference>
<dbReference type="Pfam" id="PF01425">
    <property type="entry name" value="Amidase"/>
    <property type="match status" value="1"/>
</dbReference>
<dbReference type="SUPFAM" id="SSF75304">
    <property type="entry name" value="Amidase signature (AS) enzymes"/>
    <property type="match status" value="1"/>
</dbReference>
<dbReference type="PROSITE" id="PS00571">
    <property type="entry name" value="AMIDASES"/>
    <property type="match status" value="1"/>
</dbReference>
<gene>
    <name evidence="1" type="primary">gatA</name>
    <name type="ordered locus">GOX2383</name>
</gene>
<name>GATA_GLUOX</name>
<organism>
    <name type="scientific">Gluconobacter oxydans (strain 621H)</name>
    <name type="common">Gluconobacter suboxydans</name>
    <dbReference type="NCBI Taxonomy" id="290633"/>
    <lineage>
        <taxon>Bacteria</taxon>
        <taxon>Pseudomonadati</taxon>
        <taxon>Pseudomonadota</taxon>
        <taxon>Alphaproteobacteria</taxon>
        <taxon>Acetobacterales</taxon>
        <taxon>Acetobacteraceae</taxon>
        <taxon>Gluconobacter</taxon>
    </lineage>
</organism>
<sequence length="495" mass="52259">MSGIHDFTLASARDALKARKISAVELTNAHIDAIERLDGQLNSFITRTPDQAREAAKASDEALAKGEGGSLCGIPLGIKDLFCTNGVRTTAASKILGNFVPPYESTVTANLLKDGAVFLGKLNLDEFAMGSANLTSAFGPVENPWKRKDSDAKLVPGGSSGGSAAAVAAGLVLGATGTDTGGSIRQPAAFTGIAGIKPTYGRCSRFGTIAFASSLDQAGPMARNLQDCAILLESMAGFDPRDSTSVDTPVPHYEAALKRGVKGLRVGIPKEYHVEGMPAEIEALWQQGMTWLRDVGAEIVEVSLPHTKYGLPTYYIAALAEASSNLARYDGVRFGERVSASTLDGLYEASRAAGFGDEVKRRILIGTHVLSSGYYDAYYLRAQKVRTLIQQDFLKAFENVDVLLTPTAPSGAFAQDEKPTDPVQMYLNDVFTVPASMAGVPALSVPAGLDARGVPLGLQLIGKFFDEETLIAAGHAIEQAAAFHHRPTIHAGVSA</sequence>